<evidence type="ECO:0000250" key="1"/>
<evidence type="ECO:0000255" key="2">
    <source>
        <dbReference type="HAMAP-Rule" id="MF_00118"/>
    </source>
</evidence>
<evidence type="ECO:0000305" key="3"/>
<name>EFTU_CHAVU</name>
<protein>
    <recommendedName>
        <fullName>Elongation factor Tu, chloroplastic</fullName>
        <shortName>EF-Tu</shortName>
        <ecNumber evidence="2">3.6.5.3</ecNumber>
    </recommendedName>
</protein>
<geneLocation type="chloroplast"/>
<organism>
    <name type="scientific">Chara vulgaris</name>
    <name type="common">Common stonewort</name>
    <dbReference type="NCBI Taxonomy" id="55564"/>
    <lineage>
        <taxon>Eukaryota</taxon>
        <taxon>Viridiplantae</taxon>
        <taxon>Streptophyta</taxon>
        <taxon>Charophyceae</taxon>
        <taxon>Charales</taxon>
        <taxon>Characeae</taxon>
        <taxon>Chara</taxon>
    </lineage>
</organism>
<accession>Q1ACI3</accession>
<proteinExistence type="inferred from homology"/>
<comment type="function">
    <text evidence="2">GTP hydrolase that promotes the GTP-dependent binding of aminoacyl-tRNA to the A-site of ribosomes during protein biosynthesis.</text>
</comment>
<comment type="catalytic activity">
    <reaction evidence="2">
        <text>GTP + H2O = GDP + phosphate + H(+)</text>
        <dbReference type="Rhea" id="RHEA:19669"/>
        <dbReference type="ChEBI" id="CHEBI:15377"/>
        <dbReference type="ChEBI" id="CHEBI:15378"/>
        <dbReference type="ChEBI" id="CHEBI:37565"/>
        <dbReference type="ChEBI" id="CHEBI:43474"/>
        <dbReference type="ChEBI" id="CHEBI:58189"/>
        <dbReference type="EC" id="3.6.5.3"/>
    </reaction>
    <physiologicalReaction direction="left-to-right" evidence="2">
        <dbReference type="Rhea" id="RHEA:19670"/>
    </physiologicalReaction>
</comment>
<comment type="subcellular location">
    <subcellularLocation>
        <location>Plastid</location>
        <location>Chloroplast</location>
    </subcellularLocation>
</comment>
<comment type="similarity">
    <text evidence="3">Belongs to the TRAFAC class translation factor GTPase superfamily. Classic translation factor GTPase family. EF-Tu/EF-1A subfamily.</text>
</comment>
<keyword id="KW-0150">Chloroplast</keyword>
<keyword id="KW-0251">Elongation factor</keyword>
<keyword id="KW-0342">GTP-binding</keyword>
<keyword id="KW-0378">Hydrolase</keyword>
<keyword id="KW-0460">Magnesium</keyword>
<keyword id="KW-0479">Metal-binding</keyword>
<keyword id="KW-0547">Nucleotide-binding</keyword>
<keyword id="KW-0934">Plastid</keyword>
<keyword id="KW-0648">Protein biosynthesis</keyword>
<sequence length="419" mass="46449">MAQEVFQRTKPHVNIGTIGHVDHGKTTLTAAITMTLAVNSTCTPKKYDEIDAAPEERARGITINTAHVEYETASRHYAHVDCPGHADYIKNMITGAAQMDGAILVVSAADGPMPQTKEHILLAKQVGVPSIVVFLNKEDQVDDEEILQLVDLEVRESLINYEFPGDKVPVVAGSALMALQALTEKPNTLRGENKWVDKIYELMDAVDSYIPTPKRDIEKPFLMPIEDVFSIQGRGTVATGRIERGILKLGDIVELIGLNEKIRSTVVTGLEMFRRLLEQGFAGENIGVLLRGIEKKDIERGMVIAQPGTIEPHTRFEAQVYILRKEEGGRHSPFFAGYRPQFFVRTADVTGVIEAFEYDNGDKTRMVMPGDRVKMIVNLICPIAIEKKMRFAIREGGRTIGAGVVLQILDSTQLKSKNK</sequence>
<feature type="chain" id="PRO_0000275376" description="Elongation factor Tu, chloroplastic">
    <location>
        <begin position="1"/>
        <end position="419"/>
    </location>
</feature>
<feature type="domain" description="tr-type G">
    <location>
        <begin position="10"/>
        <end position="214"/>
    </location>
</feature>
<feature type="region of interest" description="G1" evidence="1">
    <location>
        <begin position="19"/>
        <end position="26"/>
    </location>
</feature>
<feature type="region of interest" description="G2" evidence="1">
    <location>
        <begin position="60"/>
        <end position="64"/>
    </location>
</feature>
<feature type="region of interest" description="G3" evidence="1">
    <location>
        <begin position="81"/>
        <end position="84"/>
    </location>
</feature>
<feature type="region of interest" description="G4" evidence="1">
    <location>
        <begin position="136"/>
        <end position="139"/>
    </location>
</feature>
<feature type="region of interest" description="G5" evidence="1">
    <location>
        <begin position="174"/>
        <end position="176"/>
    </location>
</feature>
<feature type="binding site" evidence="1">
    <location>
        <begin position="19"/>
        <end position="26"/>
    </location>
    <ligand>
        <name>GTP</name>
        <dbReference type="ChEBI" id="CHEBI:37565"/>
    </ligand>
</feature>
<feature type="binding site" evidence="2">
    <location>
        <position position="26"/>
    </location>
    <ligand>
        <name>Mg(2+)</name>
        <dbReference type="ChEBI" id="CHEBI:18420"/>
    </ligand>
</feature>
<feature type="binding site" evidence="1">
    <location>
        <begin position="81"/>
        <end position="85"/>
    </location>
    <ligand>
        <name>GTP</name>
        <dbReference type="ChEBI" id="CHEBI:37565"/>
    </ligand>
</feature>
<feature type="binding site" evidence="1">
    <location>
        <begin position="136"/>
        <end position="139"/>
    </location>
    <ligand>
        <name>GTP</name>
        <dbReference type="ChEBI" id="CHEBI:37565"/>
    </ligand>
</feature>
<dbReference type="EC" id="3.6.5.3" evidence="2"/>
<dbReference type="EMBL" id="DQ229107">
    <property type="protein sequence ID" value="ABA61966.1"/>
    <property type="molecule type" value="Genomic_DNA"/>
</dbReference>
<dbReference type="RefSeq" id="YP_635764.1">
    <property type="nucleotide sequence ID" value="NC_008097.1"/>
</dbReference>
<dbReference type="SMR" id="Q1ACI3"/>
<dbReference type="GeneID" id="4100337"/>
<dbReference type="GO" id="GO:0009507">
    <property type="term" value="C:chloroplast"/>
    <property type="evidence" value="ECO:0007669"/>
    <property type="project" value="UniProtKB-SubCell"/>
</dbReference>
<dbReference type="GO" id="GO:0005739">
    <property type="term" value="C:mitochondrion"/>
    <property type="evidence" value="ECO:0007669"/>
    <property type="project" value="TreeGrafter"/>
</dbReference>
<dbReference type="GO" id="GO:0005525">
    <property type="term" value="F:GTP binding"/>
    <property type="evidence" value="ECO:0007669"/>
    <property type="project" value="UniProtKB-UniRule"/>
</dbReference>
<dbReference type="GO" id="GO:0003924">
    <property type="term" value="F:GTPase activity"/>
    <property type="evidence" value="ECO:0007669"/>
    <property type="project" value="InterPro"/>
</dbReference>
<dbReference type="GO" id="GO:0003746">
    <property type="term" value="F:translation elongation factor activity"/>
    <property type="evidence" value="ECO:0007669"/>
    <property type="project" value="UniProtKB-UniRule"/>
</dbReference>
<dbReference type="GO" id="GO:0070125">
    <property type="term" value="P:mitochondrial translational elongation"/>
    <property type="evidence" value="ECO:0007669"/>
    <property type="project" value="TreeGrafter"/>
</dbReference>
<dbReference type="CDD" id="cd01884">
    <property type="entry name" value="EF_Tu"/>
    <property type="match status" value="1"/>
</dbReference>
<dbReference type="CDD" id="cd03697">
    <property type="entry name" value="EFTU_II"/>
    <property type="match status" value="1"/>
</dbReference>
<dbReference type="CDD" id="cd03707">
    <property type="entry name" value="EFTU_III"/>
    <property type="match status" value="1"/>
</dbReference>
<dbReference type="FunFam" id="2.40.30.10:FF:000001">
    <property type="entry name" value="Elongation factor Tu"/>
    <property type="match status" value="1"/>
</dbReference>
<dbReference type="FunFam" id="3.40.50.300:FF:000003">
    <property type="entry name" value="Elongation factor Tu"/>
    <property type="match status" value="1"/>
</dbReference>
<dbReference type="Gene3D" id="3.40.50.300">
    <property type="entry name" value="P-loop containing nucleotide triphosphate hydrolases"/>
    <property type="match status" value="1"/>
</dbReference>
<dbReference type="Gene3D" id="2.40.30.10">
    <property type="entry name" value="Translation factors"/>
    <property type="match status" value="2"/>
</dbReference>
<dbReference type="HAMAP" id="MF_00118_B">
    <property type="entry name" value="EF_Tu_B"/>
    <property type="match status" value="1"/>
</dbReference>
<dbReference type="InterPro" id="IPR041709">
    <property type="entry name" value="EF-Tu_GTP-bd"/>
</dbReference>
<dbReference type="InterPro" id="IPR050055">
    <property type="entry name" value="EF-Tu_GTPase"/>
</dbReference>
<dbReference type="InterPro" id="IPR004161">
    <property type="entry name" value="EFTu-like_2"/>
</dbReference>
<dbReference type="InterPro" id="IPR033720">
    <property type="entry name" value="EFTU_2"/>
</dbReference>
<dbReference type="InterPro" id="IPR031157">
    <property type="entry name" value="G_TR_CS"/>
</dbReference>
<dbReference type="InterPro" id="IPR027417">
    <property type="entry name" value="P-loop_NTPase"/>
</dbReference>
<dbReference type="InterPro" id="IPR005225">
    <property type="entry name" value="Small_GTP-bd"/>
</dbReference>
<dbReference type="InterPro" id="IPR000795">
    <property type="entry name" value="T_Tr_GTP-bd_dom"/>
</dbReference>
<dbReference type="InterPro" id="IPR009000">
    <property type="entry name" value="Transl_B-barrel_sf"/>
</dbReference>
<dbReference type="InterPro" id="IPR009001">
    <property type="entry name" value="Transl_elong_EF1A/Init_IF2_C"/>
</dbReference>
<dbReference type="InterPro" id="IPR004541">
    <property type="entry name" value="Transl_elong_EFTu/EF1A_bac/org"/>
</dbReference>
<dbReference type="InterPro" id="IPR004160">
    <property type="entry name" value="Transl_elong_EFTu/EF1A_C"/>
</dbReference>
<dbReference type="NCBIfam" id="TIGR00485">
    <property type="entry name" value="EF-Tu"/>
    <property type="match status" value="1"/>
</dbReference>
<dbReference type="NCBIfam" id="NF000766">
    <property type="entry name" value="PRK00049.1"/>
    <property type="match status" value="1"/>
</dbReference>
<dbReference type="NCBIfam" id="NF009372">
    <property type="entry name" value="PRK12735.1"/>
    <property type="match status" value="1"/>
</dbReference>
<dbReference type="NCBIfam" id="NF009373">
    <property type="entry name" value="PRK12736.1"/>
    <property type="match status" value="1"/>
</dbReference>
<dbReference type="NCBIfam" id="TIGR00231">
    <property type="entry name" value="small_GTP"/>
    <property type="match status" value="1"/>
</dbReference>
<dbReference type="PANTHER" id="PTHR43721:SF5">
    <property type="entry name" value="ELONGATION FACTOR TU, CHLOROPLASTIC"/>
    <property type="match status" value="1"/>
</dbReference>
<dbReference type="PANTHER" id="PTHR43721">
    <property type="entry name" value="ELONGATION FACTOR TU-RELATED"/>
    <property type="match status" value="1"/>
</dbReference>
<dbReference type="Pfam" id="PF00009">
    <property type="entry name" value="GTP_EFTU"/>
    <property type="match status" value="1"/>
</dbReference>
<dbReference type="Pfam" id="PF03144">
    <property type="entry name" value="GTP_EFTU_D2"/>
    <property type="match status" value="1"/>
</dbReference>
<dbReference type="Pfam" id="PF03143">
    <property type="entry name" value="GTP_EFTU_D3"/>
    <property type="match status" value="1"/>
</dbReference>
<dbReference type="PRINTS" id="PR00315">
    <property type="entry name" value="ELONGATNFCT"/>
</dbReference>
<dbReference type="SUPFAM" id="SSF50465">
    <property type="entry name" value="EF-Tu/eEF-1alpha/eIF2-gamma C-terminal domain"/>
    <property type="match status" value="1"/>
</dbReference>
<dbReference type="SUPFAM" id="SSF52540">
    <property type="entry name" value="P-loop containing nucleoside triphosphate hydrolases"/>
    <property type="match status" value="1"/>
</dbReference>
<dbReference type="SUPFAM" id="SSF50447">
    <property type="entry name" value="Translation proteins"/>
    <property type="match status" value="1"/>
</dbReference>
<dbReference type="PROSITE" id="PS00301">
    <property type="entry name" value="G_TR_1"/>
    <property type="match status" value="1"/>
</dbReference>
<dbReference type="PROSITE" id="PS51722">
    <property type="entry name" value="G_TR_2"/>
    <property type="match status" value="1"/>
</dbReference>
<reference key="1">
    <citation type="journal article" date="2006" name="Mol. Biol. Evol.">
        <title>The chloroplast genome sequence of Chara vulgaris sheds new light into the closest green algal relatives of land plants.</title>
        <authorList>
            <person name="Turmel M."/>
            <person name="Otis C."/>
            <person name="Lemieux C."/>
        </authorList>
    </citation>
    <scope>NUCLEOTIDE SEQUENCE [LARGE SCALE GENOMIC DNA]</scope>
</reference>
<gene>
    <name type="primary">tufA</name>
</gene>